<organism>
    <name type="scientific">Salmonella dublin (strain CT_02021853)</name>
    <dbReference type="NCBI Taxonomy" id="439851"/>
    <lineage>
        <taxon>Bacteria</taxon>
        <taxon>Pseudomonadati</taxon>
        <taxon>Pseudomonadota</taxon>
        <taxon>Gammaproteobacteria</taxon>
        <taxon>Enterobacterales</taxon>
        <taxon>Enterobacteriaceae</taxon>
        <taxon>Salmonella</taxon>
    </lineage>
</organism>
<accession>B5FRM8</accession>
<protein>
    <recommendedName>
        <fullName evidence="1">RNA-binding protein Hfq</fullName>
    </recommendedName>
</protein>
<name>HFQ_SALDC</name>
<dbReference type="EMBL" id="CP001144">
    <property type="protein sequence ID" value="ACH75901.1"/>
    <property type="molecule type" value="Genomic_DNA"/>
</dbReference>
<dbReference type="RefSeq" id="WP_001051875.1">
    <property type="nucleotide sequence ID" value="NC_011205.1"/>
</dbReference>
<dbReference type="SMR" id="B5FRM8"/>
<dbReference type="KEGG" id="sed:SeD_A4758"/>
<dbReference type="HOGENOM" id="CLU_113688_2_1_6"/>
<dbReference type="Proteomes" id="UP000008322">
    <property type="component" value="Chromosome"/>
</dbReference>
<dbReference type="GO" id="GO:0005829">
    <property type="term" value="C:cytosol"/>
    <property type="evidence" value="ECO:0007669"/>
    <property type="project" value="TreeGrafter"/>
</dbReference>
<dbReference type="GO" id="GO:0003723">
    <property type="term" value="F:RNA binding"/>
    <property type="evidence" value="ECO:0007669"/>
    <property type="project" value="UniProtKB-UniRule"/>
</dbReference>
<dbReference type="GO" id="GO:0006355">
    <property type="term" value="P:regulation of DNA-templated transcription"/>
    <property type="evidence" value="ECO:0007669"/>
    <property type="project" value="InterPro"/>
</dbReference>
<dbReference type="GO" id="GO:0043487">
    <property type="term" value="P:regulation of RNA stability"/>
    <property type="evidence" value="ECO:0007669"/>
    <property type="project" value="TreeGrafter"/>
</dbReference>
<dbReference type="GO" id="GO:0045974">
    <property type="term" value="P:regulation of translation, ncRNA-mediated"/>
    <property type="evidence" value="ECO:0007669"/>
    <property type="project" value="TreeGrafter"/>
</dbReference>
<dbReference type="CDD" id="cd01716">
    <property type="entry name" value="Hfq"/>
    <property type="match status" value="1"/>
</dbReference>
<dbReference type="FunFam" id="2.30.30.100:FF:000001">
    <property type="entry name" value="RNA-binding protein Hfq"/>
    <property type="match status" value="1"/>
</dbReference>
<dbReference type="Gene3D" id="2.30.30.100">
    <property type="match status" value="1"/>
</dbReference>
<dbReference type="HAMAP" id="MF_00436">
    <property type="entry name" value="Hfq"/>
    <property type="match status" value="1"/>
</dbReference>
<dbReference type="InterPro" id="IPR005001">
    <property type="entry name" value="Hfq"/>
</dbReference>
<dbReference type="InterPro" id="IPR010920">
    <property type="entry name" value="LSM_dom_sf"/>
</dbReference>
<dbReference type="InterPro" id="IPR047575">
    <property type="entry name" value="Sm"/>
</dbReference>
<dbReference type="NCBIfam" id="TIGR02383">
    <property type="entry name" value="Hfq"/>
    <property type="match status" value="1"/>
</dbReference>
<dbReference type="NCBIfam" id="NF001602">
    <property type="entry name" value="PRK00395.1"/>
    <property type="match status" value="1"/>
</dbReference>
<dbReference type="PANTHER" id="PTHR34772">
    <property type="entry name" value="RNA-BINDING PROTEIN HFQ"/>
    <property type="match status" value="1"/>
</dbReference>
<dbReference type="PANTHER" id="PTHR34772:SF1">
    <property type="entry name" value="RNA-BINDING PROTEIN HFQ"/>
    <property type="match status" value="1"/>
</dbReference>
<dbReference type="Pfam" id="PF17209">
    <property type="entry name" value="Hfq"/>
    <property type="match status" value="1"/>
</dbReference>
<dbReference type="SUPFAM" id="SSF50182">
    <property type="entry name" value="Sm-like ribonucleoproteins"/>
    <property type="match status" value="1"/>
</dbReference>
<dbReference type="PROSITE" id="PS52002">
    <property type="entry name" value="SM"/>
    <property type="match status" value="1"/>
</dbReference>
<reference key="1">
    <citation type="journal article" date="2011" name="J. Bacteriol.">
        <title>Comparative genomics of 28 Salmonella enterica isolates: evidence for CRISPR-mediated adaptive sublineage evolution.</title>
        <authorList>
            <person name="Fricke W.F."/>
            <person name="Mammel M.K."/>
            <person name="McDermott P.F."/>
            <person name="Tartera C."/>
            <person name="White D.G."/>
            <person name="Leclerc J.E."/>
            <person name="Ravel J."/>
            <person name="Cebula T.A."/>
        </authorList>
    </citation>
    <scope>NUCLEOTIDE SEQUENCE [LARGE SCALE GENOMIC DNA]</scope>
    <source>
        <strain>CT_02021853</strain>
    </source>
</reference>
<feature type="chain" id="PRO_1000190352" description="RNA-binding protein Hfq">
    <location>
        <begin position="1"/>
        <end position="102"/>
    </location>
</feature>
<feature type="domain" description="Sm" evidence="2">
    <location>
        <begin position="9"/>
        <end position="68"/>
    </location>
</feature>
<feature type="region of interest" description="Disordered" evidence="3">
    <location>
        <begin position="63"/>
        <end position="102"/>
    </location>
</feature>
<feature type="compositionally biased region" description="Low complexity" evidence="3">
    <location>
        <begin position="70"/>
        <end position="88"/>
    </location>
</feature>
<comment type="function">
    <text evidence="1">RNA chaperone that binds small regulatory RNA (sRNAs) and mRNAs to facilitate mRNA translational regulation in response to envelope stress, environmental stress and changes in metabolite concentrations. Also binds with high specificity to tRNAs.</text>
</comment>
<comment type="subunit">
    <text evidence="1">Homohexamer.</text>
</comment>
<comment type="similarity">
    <text evidence="1">Belongs to the Hfq family.</text>
</comment>
<evidence type="ECO:0000255" key="1">
    <source>
        <dbReference type="HAMAP-Rule" id="MF_00436"/>
    </source>
</evidence>
<evidence type="ECO:0000255" key="2">
    <source>
        <dbReference type="PROSITE-ProRule" id="PRU01346"/>
    </source>
</evidence>
<evidence type="ECO:0000256" key="3">
    <source>
        <dbReference type="SAM" id="MobiDB-lite"/>
    </source>
</evidence>
<sequence length="102" mass="11133">MAKGQSLQDPFLNALRRERVPVSIYLVNGIKLQGQIESFDQFVILLKNTVSQMVYKHAISTVVPSRPVSHHSNNAGGGASNNYHHGSNAQGSTAQQDSEETE</sequence>
<proteinExistence type="inferred from homology"/>
<gene>
    <name evidence="1" type="primary">hfq</name>
    <name type="ordered locus">SeD_A4758</name>
</gene>
<keyword id="KW-0694">RNA-binding</keyword>
<keyword id="KW-0346">Stress response</keyword>